<comment type="catalytic activity">
    <reaction evidence="1">
        <text>tRNA(Cys) + L-cysteine + ATP = L-cysteinyl-tRNA(Cys) + AMP + diphosphate</text>
        <dbReference type="Rhea" id="RHEA:17773"/>
        <dbReference type="Rhea" id="RHEA-COMP:9661"/>
        <dbReference type="Rhea" id="RHEA-COMP:9679"/>
        <dbReference type="ChEBI" id="CHEBI:30616"/>
        <dbReference type="ChEBI" id="CHEBI:33019"/>
        <dbReference type="ChEBI" id="CHEBI:35235"/>
        <dbReference type="ChEBI" id="CHEBI:78442"/>
        <dbReference type="ChEBI" id="CHEBI:78517"/>
        <dbReference type="ChEBI" id="CHEBI:456215"/>
        <dbReference type="EC" id="6.1.1.16"/>
    </reaction>
</comment>
<comment type="cofactor">
    <cofactor evidence="1">
        <name>Zn(2+)</name>
        <dbReference type="ChEBI" id="CHEBI:29105"/>
    </cofactor>
    <text evidence="1">Binds 1 zinc ion per subunit.</text>
</comment>
<comment type="subunit">
    <text evidence="1">Monomer.</text>
</comment>
<comment type="subcellular location">
    <subcellularLocation>
        <location evidence="1">Cytoplasm</location>
    </subcellularLocation>
</comment>
<comment type="similarity">
    <text evidence="1">Belongs to the class-I aminoacyl-tRNA synthetase family.</text>
</comment>
<proteinExistence type="inferred from homology"/>
<accession>Q0I1Q1</accession>
<gene>
    <name evidence="1" type="primary">cysS</name>
    <name type="ordered locus">HS_0242</name>
</gene>
<evidence type="ECO:0000255" key="1">
    <source>
        <dbReference type="HAMAP-Rule" id="MF_00041"/>
    </source>
</evidence>
<reference key="1">
    <citation type="journal article" date="2007" name="J. Bacteriol.">
        <title>Complete genome sequence of Haemophilus somnus (Histophilus somni) strain 129Pt and comparison to Haemophilus ducreyi 35000HP and Haemophilus influenzae Rd.</title>
        <authorList>
            <person name="Challacombe J.F."/>
            <person name="Duncan A.J."/>
            <person name="Brettin T.S."/>
            <person name="Bruce D."/>
            <person name="Chertkov O."/>
            <person name="Detter J.C."/>
            <person name="Han C.S."/>
            <person name="Misra M."/>
            <person name="Richardson P."/>
            <person name="Tapia R."/>
            <person name="Thayer N."/>
            <person name="Xie G."/>
            <person name="Inzana T.J."/>
        </authorList>
    </citation>
    <scope>NUCLEOTIDE SEQUENCE [LARGE SCALE GENOMIC DNA]</scope>
    <source>
        <strain>129Pt</strain>
    </source>
</reference>
<keyword id="KW-0030">Aminoacyl-tRNA synthetase</keyword>
<keyword id="KW-0067">ATP-binding</keyword>
<keyword id="KW-0963">Cytoplasm</keyword>
<keyword id="KW-0436">Ligase</keyword>
<keyword id="KW-0479">Metal-binding</keyword>
<keyword id="KW-0547">Nucleotide-binding</keyword>
<keyword id="KW-0648">Protein biosynthesis</keyword>
<keyword id="KW-0862">Zinc</keyword>
<organism>
    <name type="scientific">Histophilus somni (strain 129Pt)</name>
    <name type="common">Haemophilus somnus</name>
    <dbReference type="NCBI Taxonomy" id="205914"/>
    <lineage>
        <taxon>Bacteria</taxon>
        <taxon>Pseudomonadati</taxon>
        <taxon>Pseudomonadota</taxon>
        <taxon>Gammaproteobacteria</taxon>
        <taxon>Pasteurellales</taxon>
        <taxon>Pasteurellaceae</taxon>
        <taxon>Histophilus</taxon>
    </lineage>
</organism>
<feature type="chain" id="PRO_0000332834" description="Cysteine--tRNA ligase">
    <location>
        <begin position="1"/>
        <end position="459"/>
    </location>
</feature>
<feature type="short sequence motif" description="'HIGH' region">
    <location>
        <begin position="30"/>
        <end position="40"/>
    </location>
</feature>
<feature type="short sequence motif" description="'KMSKS' region">
    <location>
        <begin position="266"/>
        <end position="270"/>
    </location>
</feature>
<feature type="binding site" evidence="1">
    <location>
        <position position="28"/>
    </location>
    <ligand>
        <name>Zn(2+)</name>
        <dbReference type="ChEBI" id="CHEBI:29105"/>
    </ligand>
</feature>
<feature type="binding site" evidence="1">
    <location>
        <position position="209"/>
    </location>
    <ligand>
        <name>Zn(2+)</name>
        <dbReference type="ChEBI" id="CHEBI:29105"/>
    </ligand>
</feature>
<feature type="binding site" evidence="1">
    <location>
        <position position="234"/>
    </location>
    <ligand>
        <name>Zn(2+)</name>
        <dbReference type="ChEBI" id="CHEBI:29105"/>
    </ligand>
</feature>
<feature type="binding site" evidence="1">
    <location>
        <position position="238"/>
    </location>
    <ligand>
        <name>Zn(2+)</name>
        <dbReference type="ChEBI" id="CHEBI:29105"/>
    </ligand>
</feature>
<feature type="binding site" evidence="1">
    <location>
        <position position="269"/>
    </location>
    <ligand>
        <name>ATP</name>
        <dbReference type="ChEBI" id="CHEBI:30616"/>
    </ligand>
</feature>
<dbReference type="EC" id="6.1.1.16" evidence="1"/>
<dbReference type="EMBL" id="CP000436">
    <property type="protein sequence ID" value="ABI24520.1"/>
    <property type="molecule type" value="Genomic_DNA"/>
</dbReference>
<dbReference type="SMR" id="Q0I1Q1"/>
<dbReference type="KEGG" id="hso:HS_0242"/>
<dbReference type="eggNOG" id="COG0215">
    <property type="taxonomic scope" value="Bacteria"/>
</dbReference>
<dbReference type="HOGENOM" id="CLU_013528_0_1_6"/>
<dbReference type="GO" id="GO:0005829">
    <property type="term" value="C:cytosol"/>
    <property type="evidence" value="ECO:0007669"/>
    <property type="project" value="TreeGrafter"/>
</dbReference>
<dbReference type="GO" id="GO:0005524">
    <property type="term" value="F:ATP binding"/>
    <property type="evidence" value="ECO:0007669"/>
    <property type="project" value="UniProtKB-UniRule"/>
</dbReference>
<dbReference type="GO" id="GO:0004817">
    <property type="term" value="F:cysteine-tRNA ligase activity"/>
    <property type="evidence" value="ECO:0007669"/>
    <property type="project" value="UniProtKB-UniRule"/>
</dbReference>
<dbReference type="GO" id="GO:0008270">
    <property type="term" value="F:zinc ion binding"/>
    <property type="evidence" value="ECO:0007669"/>
    <property type="project" value="UniProtKB-UniRule"/>
</dbReference>
<dbReference type="GO" id="GO:0006423">
    <property type="term" value="P:cysteinyl-tRNA aminoacylation"/>
    <property type="evidence" value="ECO:0007669"/>
    <property type="project" value="UniProtKB-UniRule"/>
</dbReference>
<dbReference type="CDD" id="cd07963">
    <property type="entry name" value="Anticodon_Ia_Cys"/>
    <property type="match status" value="1"/>
</dbReference>
<dbReference type="CDD" id="cd00672">
    <property type="entry name" value="CysRS_core"/>
    <property type="match status" value="1"/>
</dbReference>
<dbReference type="FunFam" id="1.20.120.1910:FF:000001">
    <property type="entry name" value="Cysteine--tRNA ligase"/>
    <property type="match status" value="1"/>
</dbReference>
<dbReference type="FunFam" id="3.40.50.620:FF:000009">
    <property type="entry name" value="Cysteine--tRNA ligase"/>
    <property type="match status" value="1"/>
</dbReference>
<dbReference type="Gene3D" id="1.20.120.1910">
    <property type="entry name" value="Cysteine-tRNA ligase, C-terminal anti-codon recognition domain"/>
    <property type="match status" value="1"/>
</dbReference>
<dbReference type="Gene3D" id="3.40.50.620">
    <property type="entry name" value="HUPs"/>
    <property type="match status" value="1"/>
</dbReference>
<dbReference type="HAMAP" id="MF_00041">
    <property type="entry name" value="Cys_tRNA_synth"/>
    <property type="match status" value="1"/>
</dbReference>
<dbReference type="InterPro" id="IPR015803">
    <property type="entry name" value="Cys-tRNA-ligase"/>
</dbReference>
<dbReference type="InterPro" id="IPR015273">
    <property type="entry name" value="Cys-tRNA-synt_Ia_DALR"/>
</dbReference>
<dbReference type="InterPro" id="IPR024909">
    <property type="entry name" value="Cys-tRNA/MSH_ligase"/>
</dbReference>
<dbReference type="InterPro" id="IPR056411">
    <property type="entry name" value="CysS_C"/>
</dbReference>
<dbReference type="InterPro" id="IPR014729">
    <property type="entry name" value="Rossmann-like_a/b/a_fold"/>
</dbReference>
<dbReference type="InterPro" id="IPR032678">
    <property type="entry name" value="tRNA-synt_1_cat_dom"/>
</dbReference>
<dbReference type="InterPro" id="IPR009080">
    <property type="entry name" value="tRNAsynth_Ia_anticodon-bd"/>
</dbReference>
<dbReference type="NCBIfam" id="TIGR00435">
    <property type="entry name" value="cysS"/>
    <property type="match status" value="1"/>
</dbReference>
<dbReference type="PANTHER" id="PTHR10890:SF3">
    <property type="entry name" value="CYSTEINE--TRNA LIGASE, CYTOPLASMIC"/>
    <property type="match status" value="1"/>
</dbReference>
<dbReference type="PANTHER" id="PTHR10890">
    <property type="entry name" value="CYSTEINYL-TRNA SYNTHETASE"/>
    <property type="match status" value="1"/>
</dbReference>
<dbReference type="Pfam" id="PF23493">
    <property type="entry name" value="CysS_C"/>
    <property type="match status" value="1"/>
</dbReference>
<dbReference type="Pfam" id="PF09190">
    <property type="entry name" value="DALR_2"/>
    <property type="match status" value="1"/>
</dbReference>
<dbReference type="Pfam" id="PF01406">
    <property type="entry name" value="tRNA-synt_1e"/>
    <property type="match status" value="1"/>
</dbReference>
<dbReference type="PRINTS" id="PR00983">
    <property type="entry name" value="TRNASYNTHCYS"/>
</dbReference>
<dbReference type="SMART" id="SM00840">
    <property type="entry name" value="DALR_2"/>
    <property type="match status" value="1"/>
</dbReference>
<dbReference type="SUPFAM" id="SSF47323">
    <property type="entry name" value="Anticodon-binding domain of a subclass of class I aminoacyl-tRNA synthetases"/>
    <property type="match status" value="1"/>
</dbReference>
<dbReference type="SUPFAM" id="SSF52374">
    <property type="entry name" value="Nucleotidylyl transferase"/>
    <property type="match status" value="1"/>
</dbReference>
<sequence>MLKIFNTLTREKEVFKPISENKVGMYVCGVTVYDLCHIGHGRTFVCFDVIARYLRYLGYELTYVRNITDVDDKIIRRSLENRETCEQLVDRMVVEMYKDFDALNVLRPDFEPRATHHIAEIIALVEKLIARGHAYVADNGDVMFDVESFKEYGKLSRQDLTQLQAGARVEISEIKKNPMDFVLWKMSKENEPSWNSPWGAGRPGWHIECSAMNCKHLGEHFDIHGGGSDLMFPHHENEIAQSCCAHGNRYVNYWIHSGMIMVDKEKMSKSLGNFFTIRDVLNHYDAESVRYFLLTAHYRSQLNYSEENLDLAHGALERLYTALRGTDKSAVAFGGENFIAQFTEAMNDDFNTPNAISVLFEMAREINRLKNEDKLLADGLAARLRELAGILGLLEQDPEDFLQAGSDDAEIAKIEALIKQRNDARQAKDWARADAARNELTTMGVILEDGSNGTMWRKM</sequence>
<name>SYC_HISS1</name>
<protein>
    <recommendedName>
        <fullName evidence="1">Cysteine--tRNA ligase</fullName>
        <ecNumber evidence="1">6.1.1.16</ecNumber>
    </recommendedName>
    <alternativeName>
        <fullName evidence="1">Cysteinyl-tRNA synthetase</fullName>
        <shortName evidence="1">CysRS</shortName>
    </alternativeName>
</protein>